<gene>
    <name evidence="1" type="primary">uvrB</name>
    <name type="ordered locus">Clim_0411</name>
</gene>
<name>UVRB_CHLL2</name>
<dbReference type="EMBL" id="CP001097">
    <property type="protein sequence ID" value="ACD89504.1"/>
    <property type="molecule type" value="Genomic_DNA"/>
</dbReference>
<dbReference type="RefSeq" id="WP_012465385.1">
    <property type="nucleotide sequence ID" value="NC_010803.1"/>
</dbReference>
<dbReference type="SMR" id="B3EFX1"/>
<dbReference type="STRING" id="290315.Clim_0411"/>
<dbReference type="KEGG" id="cli:Clim_0411"/>
<dbReference type="eggNOG" id="COG0556">
    <property type="taxonomic scope" value="Bacteria"/>
</dbReference>
<dbReference type="HOGENOM" id="CLU_009621_2_1_10"/>
<dbReference type="OrthoDB" id="9806651at2"/>
<dbReference type="Proteomes" id="UP000008841">
    <property type="component" value="Chromosome"/>
</dbReference>
<dbReference type="GO" id="GO:0005737">
    <property type="term" value="C:cytoplasm"/>
    <property type="evidence" value="ECO:0007669"/>
    <property type="project" value="UniProtKB-SubCell"/>
</dbReference>
<dbReference type="GO" id="GO:0009380">
    <property type="term" value="C:excinuclease repair complex"/>
    <property type="evidence" value="ECO:0007669"/>
    <property type="project" value="InterPro"/>
</dbReference>
<dbReference type="GO" id="GO:0005524">
    <property type="term" value="F:ATP binding"/>
    <property type="evidence" value="ECO:0007669"/>
    <property type="project" value="UniProtKB-UniRule"/>
</dbReference>
<dbReference type="GO" id="GO:0016887">
    <property type="term" value="F:ATP hydrolysis activity"/>
    <property type="evidence" value="ECO:0007669"/>
    <property type="project" value="InterPro"/>
</dbReference>
<dbReference type="GO" id="GO:0003677">
    <property type="term" value="F:DNA binding"/>
    <property type="evidence" value="ECO:0007669"/>
    <property type="project" value="UniProtKB-UniRule"/>
</dbReference>
<dbReference type="GO" id="GO:0009381">
    <property type="term" value="F:excinuclease ABC activity"/>
    <property type="evidence" value="ECO:0007669"/>
    <property type="project" value="UniProtKB-UniRule"/>
</dbReference>
<dbReference type="GO" id="GO:0004386">
    <property type="term" value="F:helicase activity"/>
    <property type="evidence" value="ECO:0007669"/>
    <property type="project" value="UniProtKB-KW"/>
</dbReference>
<dbReference type="GO" id="GO:0006289">
    <property type="term" value="P:nucleotide-excision repair"/>
    <property type="evidence" value="ECO:0007669"/>
    <property type="project" value="UniProtKB-UniRule"/>
</dbReference>
<dbReference type="GO" id="GO:0009432">
    <property type="term" value="P:SOS response"/>
    <property type="evidence" value="ECO:0007669"/>
    <property type="project" value="UniProtKB-UniRule"/>
</dbReference>
<dbReference type="CDD" id="cd17916">
    <property type="entry name" value="DEXHc_UvrB"/>
    <property type="match status" value="1"/>
</dbReference>
<dbReference type="CDD" id="cd18790">
    <property type="entry name" value="SF2_C_UvrB"/>
    <property type="match status" value="1"/>
</dbReference>
<dbReference type="Gene3D" id="3.40.50.300">
    <property type="entry name" value="P-loop containing nucleotide triphosphate hydrolases"/>
    <property type="match status" value="3"/>
</dbReference>
<dbReference type="Gene3D" id="4.10.860.10">
    <property type="entry name" value="UVR domain"/>
    <property type="match status" value="1"/>
</dbReference>
<dbReference type="HAMAP" id="MF_00204">
    <property type="entry name" value="UvrB"/>
    <property type="match status" value="1"/>
</dbReference>
<dbReference type="InterPro" id="IPR006935">
    <property type="entry name" value="Helicase/UvrB_N"/>
</dbReference>
<dbReference type="InterPro" id="IPR014001">
    <property type="entry name" value="Helicase_ATP-bd"/>
</dbReference>
<dbReference type="InterPro" id="IPR001650">
    <property type="entry name" value="Helicase_C-like"/>
</dbReference>
<dbReference type="InterPro" id="IPR027417">
    <property type="entry name" value="P-loop_NTPase"/>
</dbReference>
<dbReference type="InterPro" id="IPR001943">
    <property type="entry name" value="UVR_dom"/>
</dbReference>
<dbReference type="InterPro" id="IPR036876">
    <property type="entry name" value="UVR_dom_sf"/>
</dbReference>
<dbReference type="InterPro" id="IPR004807">
    <property type="entry name" value="UvrB"/>
</dbReference>
<dbReference type="InterPro" id="IPR041471">
    <property type="entry name" value="UvrB_inter"/>
</dbReference>
<dbReference type="InterPro" id="IPR024759">
    <property type="entry name" value="UvrB_YAD/RRR_dom"/>
</dbReference>
<dbReference type="NCBIfam" id="NF003673">
    <property type="entry name" value="PRK05298.1"/>
    <property type="match status" value="1"/>
</dbReference>
<dbReference type="NCBIfam" id="TIGR00631">
    <property type="entry name" value="uvrb"/>
    <property type="match status" value="1"/>
</dbReference>
<dbReference type="PANTHER" id="PTHR24029">
    <property type="entry name" value="UVRABC SYSTEM PROTEIN B"/>
    <property type="match status" value="1"/>
</dbReference>
<dbReference type="PANTHER" id="PTHR24029:SF0">
    <property type="entry name" value="UVRABC SYSTEM PROTEIN B"/>
    <property type="match status" value="1"/>
</dbReference>
<dbReference type="Pfam" id="PF00271">
    <property type="entry name" value="Helicase_C"/>
    <property type="match status" value="1"/>
</dbReference>
<dbReference type="Pfam" id="PF04851">
    <property type="entry name" value="ResIII"/>
    <property type="match status" value="1"/>
</dbReference>
<dbReference type="Pfam" id="PF02151">
    <property type="entry name" value="UVR"/>
    <property type="match status" value="1"/>
</dbReference>
<dbReference type="Pfam" id="PF12344">
    <property type="entry name" value="UvrB"/>
    <property type="match status" value="1"/>
</dbReference>
<dbReference type="Pfam" id="PF17757">
    <property type="entry name" value="UvrB_inter"/>
    <property type="match status" value="1"/>
</dbReference>
<dbReference type="SMART" id="SM00487">
    <property type="entry name" value="DEXDc"/>
    <property type="match status" value="1"/>
</dbReference>
<dbReference type="SMART" id="SM00490">
    <property type="entry name" value="HELICc"/>
    <property type="match status" value="1"/>
</dbReference>
<dbReference type="SUPFAM" id="SSF46600">
    <property type="entry name" value="C-terminal UvrC-binding domain of UvrB"/>
    <property type="match status" value="1"/>
</dbReference>
<dbReference type="SUPFAM" id="SSF52540">
    <property type="entry name" value="P-loop containing nucleoside triphosphate hydrolases"/>
    <property type="match status" value="2"/>
</dbReference>
<dbReference type="PROSITE" id="PS51192">
    <property type="entry name" value="HELICASE_ATP_BIND_1"/>
    <property type="match status" value="1"/>
</dbReference>
<dbReference type="PROSITE" id="PS51194">
    <property type="entry name" value="HELICASE_CTER"/>
    <property type="match status" value="1"/>
</dbReference>
<dbReference type="PROSITE" id="PS50151">
    <property type="entry name" value="UVR"/>
    <property type="match status" value="1"/>
</dbReference>
<keyword id="KW-0067">ATP-binding</keyword>
<keyword id="KW-0963">Cytoplasm</keyword>
<keyword id="KW-0227">DNA damage</keyword>
<keyword id="KW-0228">DNA excision</keyword>
<keyword id="KW-0234">DNA repair</keyword>
<keyword id="KW-0267">Excision nuclease</keyword>
<keyword id="KW-0347">Helicase</keyword>
<keyword id="KW-0378">Hydrolase</keyword>
<keyword id="KW-0547">Nucleotide-binding</keyword>
<keyword id="KW-0742">SOS response</keyword>
<sequence>MYGITGNGYRLVSSYSPKGDQPKAIEQLVEGVQRGDRWQTLLGVTGSGKTFTISNLIAQVGKPVLVMSHNKTLAAQLYGELRQFFPDNAVEYFISYYDFYQPEAYLPALDKYIAKDLRINDEIERLRLKATSSLLSGRRDVIVVSSVSCIYGLGSPEEWKAQIIELRPGMEKDRDQFLQELVSLHYVRDDMKPGPGKFRVRGDIIDLVPAHEELAVRVEFFGPEIESLQTFDMQSGEVLGRDDYAFIYPARQFVAGEEQMRHAMLAIENELAGRLNELRGENRLIEARRLEERTRYDLEMMKELGYCSGIENYSRHLAGREPGDRPHCLLDYFPEDYLVVVDESHVTLPQIRGMYGGDRSRKTILVEHGFRLPSALDNRPLRFDEYVGLVPQVVCVSATPGDLELEYSGGVIVEQLVRPTGLLDPPVEVRPVKGQIDDLLGEIRKHTARGFKALIMTLTKRMSEDLDDYFRKTGIRSRYLHSEIKSLERMQILRELRTGEIDVLVGVNLLREGLDLPEVSLVAILDADKEGFLRNTRSLMQIAGRAARNSEGFVVLYADVLTRSIREVLDETSRRRKIQQAYNEEHGIVPQSIIKSVEQVLNTTGVADAEERYRRKRFGLEPKPERLLSTLIDTLTAEECYSMAESLRLEMQEAALKMEYEKAAYLRDEITKFEHRANEAGKGI</sequence>
<evidence type="ECO:0000255" key="1">
    <source>
        <dbReference type="HAMAP-Rule" id="MF_00204"/>
    </source>
</evidence>
<comment type="function">
    <text evidence="1">The UvrABC repair system catalyzes the recognition and processing of DNA lesions. A damage recognition complex composed of 2 UvrA and 2 UvrB subunits scans DNA for abnormalities. Upon binding of the UvrA(2)B(2) complex to a putative damaged site, the DNA wraps around one UvrB monomer. DNA wrap is dependent on ATP binding by UvrB and probably causes local melting of the DNA helix, facilitating insertion of UvrB beta-hairpin between the DNA strands. Then UvrB probes one DNA strand for the presence of a lesion. If a lesion is found the UvrA subunits dissociate and the UvrB-DNA preincision complex is formed. This complex is subsequently bound by UvrC and the second UvrB is released. If no lesion is found, the DNA wraps around the other UvrB subunit that will check the other stand for damage.</text>
</comment>
<comment type="subunit">
    <text evidence="1">Forms a heterotetramer with UvrA during the search for lesions. Interacts with UvrC in an incision complex.</text>
</comment>
<comment type="subcellular location">
    <subcellularLocation>
        <location evidence="1">Cytoplasm</location>
    </subcellularLocation>
</comment>
<comment type="domain">
    <text evidence="1">The beta-hairpin motif is involved in DNA binding.</text>
</comment>
<comment type="similarity">
    <text evidence="1">Belongs to the UvrB family.</text>
</comment>
<proteinExistence type="inferred from homology"/>
<reference key="1">
    <citation type="submission" date="2008-05" db="EMBL/GenBank/DDBJ databases">
        <title>Complete sequence of Chlorobium limicola DSM 245.</title>
        <authorList>
            <consortium name="US DOE Joint Genome Institute"/>
            <person name="Lucas S."/>
            <person name="Copeland A."/>
            <person name="Lapidus A."/>
            <person name="Glavina del Rio T."/>
            <person name="Dalin E."/>
            <person name="Tice H."/>
            <person name="Bruce D."/>
            <person name="Goodwin L."/>
            <person name="Pitluck S."/>
            <person name="Schmutz J."/>
            <person name="Larimer F."/>
            <person name="Land M."/>
            <person name="Hauser L."/>
            <person name="Kyrpides N."/>
            <person name="Ovchinnikova G."/>
            <person name="Zhao F."/>
            <person name="Li T."/>
            <person name="Liu Z."/>
            <person name="Overmann J."/>
            <person name="Bryant D.A."/>
            <person name="Richardson P."/>
        </authorList>
    </citation>
    <scope>NUCLEOTIDE SEQUENCE [LARGE SCALE GENOMIC DNA]</scope>
    <source>
        <strain>DSM 245 / NBRC 103803 / 6330</strain>
    </source>
</reference>
<accession>B3EFX1</accession>
<feature type="chain" id="PRO_1000099540" description="UvrABC system protein B">
    <location>
        <begin position="1"/>
        <end position="684"/>
    </location>
</feature>
<feature type="domain" description="Helicase ATP-binding" evidence="1">
    <location>
        <begin position="30"/>
        <end position="188"/>
    </location>
</feature>
<feature type="domain" description="Helicase C-terminal" evidence="1">
    <location>
        <begin position="435"/>
        <end position="601"/>
    </location>
</feature>
<feature type="domain" description="UVR" evidence="1">
    <location>
        <begin position="641"/>
        <end position="676"/>
    </location>
</feature>
<feature type="short sequence motif" description="Beta-hairpin">
    <location>
        <begin position="96"/>
        <end position="119"/>
    </location>
</feature>
<feature type="binding site" evidence="1">
    <location>
        <begin position="43"/>
        <end position="50"/>
    </location>
    <ligand>
        <name>ATP</name>
        <dbReference type="ChEBI" id="CHEBI:30616"/>
    </ligand>
</feature>
<protein>
    <recommendedName>
        <fullName evidence="1">UvrABC system protein B</fullName>
        <shortName evidence="1">Protein UvrB</shortName>
    </recommendedName>
    <alternativeName>
        <fullName evidence="1">Excinuclease ABC subunit B</fullName>
    </alternativeName>
</protein>
<organism>
    <name type="scientific">Chlorobium limicola (strain DSM 245 / NBRC 103803 / 6330)</name>
    <dbReference type="NCBI Taxonomy" id="290315"/>
    <lineage>
        <taxon>Bacteria</taxon>
        <taxon>Pseudomonadati</taxon>
        <taxon>Chlorobiota</taxon>
        <taxon>Chlorobiia</taxon>
        <taxon>Chlorobiales</taxon>
        <taxon>Chlorobiaceae</taxon>
        <taxon>Chlorobium/Pelodictyon group</taxon>
        <taxon>Chlorobium</taxon>
    </lineage>
</organism>